<evidence type="ECO:0000250" key="1">
    <source>
        <dbReference type="UniProtKB" id="P04798"/>
    </source>
</evidence>
<evidence type="ECO:0000255" key="2"/>
<evidence type="ECO:0000256" key="3">
    <source>
        <dbReference type="SAM" id="MobiDB-lite"/>
    </source>
</evidence>
<evidence type="ECO:0000269" key="4">
    <source>
    </source>
</evidence>
<evidence type="ECO:0000303" key="5">
    <source>
    </source>
</evidence>
<evidence type="ECO:0000305" key="6"/>
<dbReference type="EC" id="1.-.-.-" evidence="4"/>
<dbReference type="EMBL" id="MSFM01000014">
    <property type="protein sequence ID" value="PKY00570.1"/>
    <property type="molecule type" value="Genomic_DNA"/>
</dbReference>
<dbReference type="SMR" id="A0A2I1CSG1"/>
<dbReference type="VEuPathDB" id="FungiDB:P168DRAFT_322179"/>
<dbReference type="OrthoDB" id="1844152at2759"/>
<dbReference type="Proteomes" id="UP000234254">
    <property type="component" value="Unassembled WGS sequence"/>
</dbReference>
<dbReference type="GO" id="GO:0016020">
    <property type="term" value="C:membrane"/>
    <property type="evidence" value="ECO:0007669"/>
    <property type="project" value="UniProtKB-SubCell"/>
</dbReference>
<dbReference type="GO" id="GO:0020037">
    <property type="term" value="F:heme binding"/>
    <property type="evidence" value="ECO:0007669"/>
    <property type="project" value="InterPro"/>
</dbReference>
<dbReference type="GO" id="GO:0005506">
    <property type="term" value="F:iron ion binding"/>
    <property type="evidence" value="ECO:0007669"/>
    <property type="project" value="InterPro"/>
</dbReference>
<dbReference type="GO" id="GO:0004497">
    <property type="term" value="F:monooxygenase activity"/>
    <property type="evidence" value="ECO:0007669"/>
    <property type="project" value="UniProtKB-KW"/>
</dbReference>
<dbReference type="GO" id="GO:0016705">
    <property type="term" value="F:oxidoreductase activity, acting on paired donors, with incorporation or reduction of molecular oxygen"/>
    <property type="evidence" value="ECO:0007669"/>
    <property type="project" value="InterPro"/>
</dbReference>
<dbReference type="GO" id="GO:0009820">
    <property type="term" value="P:alkaloid metabolic process"/>
    <property type="evidence" value="ECO:0007669"/>
    <property type="project" value="UniProtKB-KW"/>
</dbReference>
<dbReference type="GO" id="GO:0019748">
    <property type="term" value="P:secondary metabolic process"/>
    <property type="evidence" value="ECO:0007669"/>
    <property type="project" value="UniProtKB-ARBA"/>
</dbReference>
<dbReference type="CDD" id="cd11041">
    <property type="entry name" value="CYP503A1-like"/>
    <property type="match status" value="1"/>
</dbReference>
<dbReference type="Gene3D" id="1.10.630.10">
    <property type="entry name" value="Cytochrome P450"/>
    <property type="match status" value="1"/>
</dbReference>
<dbReference type="InterPro" id="IPR001128">
    <property type="entry name" value="Cyt_P450"/>
</dbReference>
<dbReference type="InterPro" id="IPR002403">
    <property type="entry name" value="Cyt_P450_E_grp-IV"/>
</dbReference>
<dbReference type="InterPro" id="IPR036396">
    <property type="entry name" value="Cyt_P450_sf"/>
</dbReference>
<dbReference type="PANTHER" id="PTHR46206">
    <property type="entry name" value="CYTOCHROME P450"/>
    <property type="match status" value="1"/>
</dbReference>
<dbReference type="Pfam" id="PF00067">
    <property type="entry name" value="p450"/>
    <property type="match status" value="1"/>
</dbReference>
<dbReference type="PRINTS" id="PR00465">
    <property type="entry name" value="EP450IV"/>
</dbReference>
<dbReference type="SUPFAM" id="SSF48264">
    <property type="entry name" value="Cytochrome P450"/>
    <property type="match status" value="1"/>
</dbReference>
<proteinExistence type="evidence at protein level"/>
<gene>
    <name evidence="5" type="primary">cpsD</name>
    <name type="ORF">P168DRAFT_322179</name>
</gene>
<name>CPSD_ASPC2</name>
<protein>
    <recommendedName>
        <fullName evidence="5">Cytochrome P450 monooxygenase cpsD</fullName>
        <ecNumber evidence="4">1.-.-.-</ecNumber>
    </recommendedName>
    <alternativeName>
        <fullName evidence="5">Campesines biosynthesis cluster protein D</fullName>
    </alternativeName>
</protein>
<accession>A0A2I1CSG1</accession>
<organism>
    <name type="scientific">Aspergillus campestris (strain IBT 28561)</name>
    <dbReference type="NCBI Taxonomy" id="1392248"/>
    <lineage>
        <taxon>Eukaryota</taxon>
        <taxon>Fungi</taxon>
        <taxon>Dikarya</taxon>
        <taxon>Ascomycota</taxon>
        <taxon>Pezizomycotina</taxon>
        <taxon>Eurotiomycetes</taxon>
        <taxon>Eurotiomycetidae</taxon>
        <taxon>Eurotiales</taxon>
        <taxon>Aspergillaceae</taxon>
        <taxon>Aspergillus</taxon>
        <taxon>Aspergillus subgen. Circumdati</taxon>
    </lineage>
</organism>
<keyword id="KW-0017">Alkaloid metabolism</keyword>
<keyword id="KW-0349">Heme</keyword>
<keyword id="KW-0408">Iron</keyword>
<keyword id="KW-0472">Membrane</keyword>
<keyword id="KW-0479">Metal-binding</keyword>
<keyword id="KW-0503">Monooxygenase</keyword>
<keyword id="KW-0560">Oxidoreductase</keyword>
<keyword id="KW-0812">Transmembrane</keyword>
<keyword id="KW-1133">Transmembrane helix</keyword>
<feature type="chain" id="PRO_0000461456" description="Cytochrome P450 monooxygenase cpsD">
    <location>
        <begin position="1"/>
        <end position="547"/>
    </location>
</feature>
<feature type="transmembrane region" description="Helical" evidence="2">
    <location>
        <begin position="18"/>
        <end position="38"/>
    </location>
</feature>
<feature type="region of interest" description="Disordered" evidence="3">
    <location>
        <begin position="528"/>
        <end position="547"/>
    </location>
</feature>
<feature type="compositionally biased region" description="Basic and acidic residues" evidence="3">
    <location>
        <begin position="534"/>
        <end position="547"/>
    </location>
</feature>
<feature type="binding site" description="axial binding residue" evidence="1">
    <location>
        <position position="476"/>
    </location>
    <ligand>
        <name>heme</name>
        <dbReference type="ChEBI" id="CHEBI:30413"/>
    </ligand>
    <ligandPart>
        <name>Fe</name>
        <dbReference type="ChEBI" id="CHEBI:18248"/>
    </ligandPart>
</feature>
<reference key="1">
    <citation type="submission" date="2016-12" db="EMBL/GenBank/DDBJ databases">
        <title>The genomes of Aspergillus section Nigri reveals drivers in fungal speciation.</title>
        <authorList>
            <consortium name="DOE Joint Genome Institute"/>
            <person name="Vesth T.C."/>
            <person name="Nybo J."/>
            <person name="Theobald S."/>
            <person name="Brandl J."/>
            <person name="Frisvad J.C."/>
            <person name="Nielsen K.F."/>
            <person name="Lyhne E.K."/>
            <person name="Kogle M.E."/>
            <person name="Kuo A."/>
            <person name="Riley R."/>
            <person name="Clum A."/>
            <person name="Nolan M."/>
            <person name="Lipzen A."/>
            <person name="Salamov A."/>
            <person name="Henrissat B."/>
            <person name="Wiebenga A."/>
            <person name="De Vries R.P."/>
            <person name="Grigoriev I.V."/>
            <person name="Mortensen U.H."/>
            <person name="Andersen M.R."/>
            <person name="Baker S.E."/>
        </authorList>
    </citation>
    <scope>NUCLEOTIDE SEQUENCE [LARGE SCALE GENOMIC DNA]</scope>
    <source>
        <strain>IBT 28561</strain>
    </source>
</reference>
<reference key="2">
    <citation type="journal article" date="2024" name="Angew. Chem. Int. Ed.">
        <title>A Cytochrome P450 Catalyzes Oxidative Coupling Formation of Insecticidal Dimeric Indole Piperazine Alkaloids.</title>
        <authorList>
            <person name="He Q."/>
            <person name="Zhang H.R."/>
            <person name="Zou Y."/>
        </authorList>
    </citation>
    <scope>FUNCTION</scope>
    <scope>CATALYTIC ACTIVITY</scope>
    <scope>BIOTECHNOLOGY</scope>
    <scope>PATHWAY</scope>
</reference>
<comment type="function">
    <text evidence="4">Cytochrome P450 monooxygenase; part of the gene cluster that mediates the biosynthesis of campesine G, a dimeric indole piperazine alkaloid that shows good insecticidal activity Galleria mellonella (PubMed:38527935). Within the pathway, cpsD acts as a dimerase that simultaneously catalyzes one C-C bond (C3-C3') and two C-N bonds (C2-N16' and C2'-N16) coupling reactions between campesines B and C to produce a heterodimer with unexpected 6/5/6/6/6/6/5/6 eight-ring scaffold called campesine D. CpsD is also able to catalyze oxidative heterocoupling od campesines A with B to produce campesine F and campesines A with C to produce campesine E (PubMed:38527935). The non-canonical non-ribosomal peptide synthetase cpsA catalyzes the first steps of the pathway by producing L-tryptophanal and L-valinal from their respective amino-acids. These products condensate spontaneously to form trypyl-valyl pyrazine also known as didehydrocampesine A. The NmrA-like family domain-containing oxidoreductase cpsB is the next enzyme in cps pathway and reduces the unstable didehydrocampesine A to campesine A. The methyltransferase cpsF and the acetyltransferase cpsE both recognize N13 of piperazine ring to carry out methylation and acetylation of campesine A to produce campesine C and B, respectively. The cytochrome P450 monooxygenase cpsD then acts as a dimerase that catalyzes oxidative heterocoupling between campesine B and C to produce heterodimers with unexpected 6/5/6/6/6/6/5/6 eight-ring scaffold called campesine D. Finally,the cytochrome P450 monooxygenase cpsC is a regioselective dehydrogenase that catalyzes dehydrogenation reaction towards C2-N1 to produce campesine G (PubMed:38527935).</text>
</comment>
<comment type="catalytic activity">
    <reaction evidence="4">
        <text>campesine B + campesine C + reduced [NADPH--hemoprotein reductase] + O2 = campesine D + oxidized [NADPH--hemoprotein reductase] + 2 H2O + 2 H(+)</text>
        <dbReference type="Rhea" id="RHEA:82831"/>
        <dbReference type="Rhea" id="RHEA-COMP:11964"/>
        <dbReference type="Rhea" id="RHEA-COMP:11965"/>
        <dbReference type="ChEBI" id="CHEBI:15377"/>
        <dbReference type="ChEBI" id="CHEBI:15378"/>
        <dbReference type="ChEBI" id="CHEBI:15379"/>
        <dbReference type="ChEBI" id="CHEBI:57618"/>
        <dbReference type="ChEBI" id="CHEBI:58210"/>
        <dbReference type="ChEBI" id="CHEBI:232510"/>
        <dbReference type="ChEBI" id="CHEBI:232511"/>
        <dbReference type="ChEBI" id="CHEBI:232513"/>
    </reaction>
    <physiologicalReaction direction="left-to-right" evidence="4">
        <dbReference type="Rhea" id="RHEA:82832"/>
    </physiologicalReaction>
</comment>
<comment type="catalytic activity">
    <reaction evidence="4">
        <text>2 campesine B + reduced [NADPH--hemoprotein reductase] + O2 = campesine F + oxidized [NADPH--hemoprotein reductase] + 2 H2O + H(+)</text>
        <dbReference type="Rhea" id="RHEA:82835"/>
        <dbReference type="Rhea" id="RHEA-COMP:11964"/>
        <dbReference type="Rhea" id="RHEA-COMP:11965"/>
        <dbReference type="ChEBI" id="CHEBI:15377"/>
        <dbReference type="ChEBI" id="CHEBI:15378"/>
        <dbReference type="ChEBI" id="CHEBI:15379"/>
        <dbReference type="ChEBI" id="CHEBI:57618"/>
        <dbReference type="ChEBI" id="CHEBI:58210"/>
        <dbReference type="ChEBI" id="CHEBI:232510"/>
        <dbReference type="ChEBI" id="CHEBI:232514"/>
    </reaction>
    <physiologicalReaction direction="left-to-right" evidence="4">
        <dbReference type="Rhea" id="RHEA:82836"/>
    </physiologicalReaction>
</comment>
<comment type="catalytic activity">
    <reaction evidence="4">
        <text>campesine C + campesine A + reduced [NADPH--hemoprotein reductase] + O2 = campesine E + oxidized [NADPH--hemoprotein reductase] + 2 H2O + 2 H(+)</text>
        <dbReference type="Rhea" id="RHEA:82839"/>
        <dbReference type="Rhea" id="RHEA-COMP:11964"/>
        <dbReference type="Rhea" id="RHEA-COMP:11965"/>
        <dbReference type="ChEBI" id="CHEBI:15377"/>
        <dbReference type="ChEBI" id="CHEBI:15378"/>
        <dbReference type="ChEBI" id="CHEBI:15379"/>
        <dbReference type="ChEBI" id="CHEBI:57618"/>
        <dbReference type="ChEBI" id="CHEBI:58210"/>
        <dbReference type="ChEBI" id="CHEBI:232509"/>
        <dbReference type="ChEBI" id="CHEBI:232511"/>
        <dbReference type="ChEBI" id="CHEBI:232515"/>
    </reaction>
    <physiologicalReaction direction="left-to-right" evidence="4">
        <dbReference type="Rhea" id="RHEA:82840"/>
    </physiologicalReaction>
</comment>
<comment type="cofactor">
    <cofactor evidence="1">
        <name>heme</name>
        <dbReference type="ChEBI" id="CHEBI:30413"/>
    </cofactor>
</comment>
<comment type="pathway">
    <text evidence="4">Alkaloid biosynthesis.</text>
</comment>
<comment type="subcellular location">
    <subcellularLocation>
        <location evidence="2">Membrane</location>
        <topology evidence="2">Single-pass membrane protein</topology>
    </subcellularLocation>
</comment>
<comment type="biotechnology">
    <text evidence="4">Campesine G features good insecticidal activity against the global honeybee pest Galleria mellonella, which supports its future application in the development of biopesticides.</text>
</comment>
<comment type="similarity">
    <text evidence="6">Belongs to the cytochrome P450 family.</text>
</comment>
<sequence length="547" mass="62715">MSPLDDVVSPSQWMLWRLTGAALVVTLITSVIIVAADLYRHWQKRRSVGQIPLIHDGSWLSPKLQWRRPSFDAESEMARAYKKYSKNGKPFAWKTQNGLDIVIILPPECGKEYYSLPREKCSFMHWVRNEMFLNTVVDVTWRVPVEAVQVSSQSAPMDRLGRVIFDHLDRVLPLFLPGPGDHEWRQVNGSDMMDSLVRDLALGLFFTPGFGEESGLRRQMSAYMDGLAGQWFARQEAPYILEHLVWRLSPTCRRFQSTIQTVRQIVVPEVRRRIQQIRSNDKDGCFLLSDLLIKQALKRGTFCREGKTGEQETLEELIVDEIMFMYMETVAPFHLVTTCMVFRIMRHPEYVAPLREELDRALKICGGEWSFEIFNHTPKMESFTREILRLHNPTSISGARCVMEPITIPSLGMALERGTHISLPSRFIHTDPENYPDPMTFNGYRFYDEASGTCNVQKTLAPSEAWLPFGIGTSACPARLLGTRTCQALFAKILMDYDVGQMDDKHVPLQMWLLGIYVPSPTISISARRRDARRTHEALGSKLKPEE</sequence>